<comment type="function">
    <text evidence="1">Mediates visceral muscle contractile activity (myotropic activity).</text>
</comment>
<comment type="subcellular location">
    <subcellularLocation>
        <location>Secreted</location>
    </subcellularLocation>
</comment>
<comment type="tissue specificity">
    <text evidence="2">Corpora cardiaca.</text>
</comment>
<comment type="mass spectrometry"/>
<comment type="similarity">
    <text evidence="3">Belongs to the pyrokinin family.</text>
</comment>
<sequence>DHLPHDVYSPRL</sequence>
<dbReference type="GO" id="GO:0005576">
    <property type="term" value="C:extracellular region"/>
    <property type="evidence" value="ECO:0007669"/>
    <property type="project" value="UniProtKB-SubCell"/>
</dbReference>
<dbReference type="GO" id="GO:0007218">
    <property type="term" value="P:neuropeptide signaling pathway"/>
    <property type="evidence" value="ECO:0007669"/>
    <property type="project" value="UniProtKB-KW"/>
</dbReference>
<organism>
    <name type="scientific">Periplaneta americana</name>
    <name type="common">American cockroach</name>
    <name type="synonym">Blatta americana</name>
    <dbReference type="NCBI Taxonomy" id="6978"/>
    <lineage>
        <taxon>Eukaryota</taxon>
        <taxon>Metazoa</taxon>
        <taxon>Ecdysozoa</taxon>
        <taxon>Arthropoda</taxon>
        <taxon>Hexapoda</taxon>
        <taxon>Insecta</taxon>
        <taxon>Pterygota</taxon>
        <taxon>Neoptera</taxon>
        <taxon>Polyneoptera</taxon>
        <taxon>Dictyoptera</taxon>
        <taxon>Blattodea</taxon>
        <taxon>Blattoidea</taxon>
        <taxon>Blattidae</taxon>
        <taxon>Blattinae</taxon>
        <taxon>Periplaneta</taxon>
    </lineage>
</organism>
<accession>P82619</accession>
<name>PPK4_PERAM</name>
<keyword id="KW-0027">Amidation</keyword>
<keyword id="KW-0903">Direct protein sequencing</keyword>
<keyword id="KW-0527">Neuropeptide</keyword>
<keyword id="KW-0964">Secreted</keyword>
<proteinExistence type="evidence at protein level"/>
<evidence type="ECO:0000269" key="1">
    <source>
    </source>
</evidence>
<evidence type="ECO:0000269" key="2">
    <source>
    </source>
</evidence>
<evidence type="ECO:0000305" key="3"/>
<protein>
    <recommendedName>
        <fullName>Pyrokinin-4</fullName>
        <shortName>Pea-PK-4</shortName>
    </recommendedName>
    <alternativeName>
        <fullName>YXPRL-amide</fullName>
    </alternativeName>
</protein>
<reference key="1">
    <citation type="journal article" date="1999" name="Insect Biochem. Mol. Biol.">
        <title>Differential distribution of pyrokinin-isoforms in cerebral and abdominal neurohemal organs of the American cockroach.</title>
        <authorList>
            <person name="Predel R."/>
            <person name="Kellner R."/>
            <person name="Nachman R.J."/>
            <person name="Holman G.M."/>
            <person name="Rapus J."/>
            <person name="Gaede G."/>
        </authorList>
    </citation>
    <scope>PROTEIN SEQUENCE</scope>
    <scope>AMIDATION AT LEU-12</scope>
    <scope>FUNCTION</scope>
    <scope>MASS SPECTROMETRY</scope>
    <source>
        <tissue>Retrocerebral complex</tissue>
    </source>
</reference>
<reference key="2">
    <citation type="journal article" date="2000" name="J. Comp. Neurol.">
        <title>Tagma-specific distribution of FXPRLamides in the nervous system of the American cockroach.</title>
        <authorList>
            <person name="Predel R."/>
            <person name="Eckert M."/>
        </authorList>
    </citation>
    <scope>TISSUE SPECIFICITY</scope>
</reference>
<feature type="peptide" id="PRO_0000044332" description="Pyrokinin-4">
    <location>
        <begin position="1"/>
        <end position="12"/>
    </location>
</feature>
<feature type="modified residue" description="Leucine amide" evidence="1">
    <location>
        <position position="12"/>
    </location>
</feature>